<accession>Q83BJ8</accession>
<feature type="chain" id="PRO_0000223763" description="Acetyl-coenzyme A carboxylase carboxyl transferase subunit alpha">
    <location>
        <begin position="1"/>
        <end position="316"/>
    </location>
</feature>
<feature type="domain" description="CoA carboxyltransferase C-terminal" evidence="2">
    <location>
        <begin position="39"/>
        <end position="293"/>
    </location>
</feature>
<dbReference type="EC" id="2.1.3.15" evidence="1"/>
<dbReference type="EMBL" id="AE016828">
    <property type="protein sequence ID" value="AAO91007.1"/>
    <property type="molecule type" value="Genomic_DNA"/>
</dbReference>
<dbReference type="RefSeq" id="NP_820493.1">
    <property type="nucleotide sequence ID" value="NC_002971.4"/>
</dbReference>
<dbReference type="RefSeq" id="WP_005772042.1">
    <property type="nucleotide sequence ID" value="NZ_CDBG01000001.1"/>
</dbReference>
<dbReference type="SMR" id="Q83BJ8"/>
<dbReference type="STRING" id="227377.CBU_1510"/>
<dbReference type="DNASU" id="1209420"/>
<dbReference type="EnsemblBacteria" id="AAO91007">
    <property type="protein sequence ID" value="AAO91007"/>
    <property type="gene ID" value="CBU_1510"/>
</dbReference>
<dbReference type="GeneID" id="1209420"/>
<dbReference type="KEGG" id="cbu:CBU_1510"/>
<dbReference type="PATRIC" id="fig|227377.7.peg.1512"/>
<dbReference type="eggNOG" id="COG0825">
    <property type="taxonomic scope" value="Bacteria"/>
</dbReference>
<dbReference type="HOGENOM" id="CLU_015486_0_2_6"/>
<dbReference type="OrthoDB" id="9808023at2"/>
<dbReference type="UniPathway" id="UPA00655">
    <property type="reaction ID" value="UER00711"/>
</dbReference>
<dbReference type="Proteomes" id="UP000002671">
    <property type="component" value="Chromosome"/>
</dbReference>
<dbReference type="GO" id="GO:0009317">
    <property type="term" value="C:acetyl-CoA carboxylase complex"/>
    <property type="evidence" value="ECO:0007669"/>
    <property type="project" value="InterPro"/>
</dbReference>
<dbReference type="GO" id="GO:0003989">
    <property type="term" value="F:acetyl-CoA carboxylase activity"/>
    <property type="evidence" value="ECO:0007669"/>
    <property type="project" value="InterPro"/>
</dbReference>
<dbReference type="GO" id="GO:0005524">
    <property type="term" value="F:ATP binding"/>
    <property type="evidence" value="ECO:0007669"/>
    <property type="project" value="UniProtKB-KW"/>
</dbReference>
<dbReference type="GO" id="GO:0016743">
    <property type="term" value="F:carboxyl- or carbamoyltransferase activity"/>
    <property type="evidence" value="ECO:0007669"/>
    <property type="project" value="UniProtKB-UniRule"/>
</dbReference>
<dbReference type="GO" id="GO:0006633">
    <property type="term" value="P:fatty acid biosynthetic process"/>
    <property type="evidence" value="ECO:0007669"/>
    <property type="project" value="UniProtKB-KW"/>
</dbReference>
<dbReference type="GO" id="GO:2001295">
    <property type="term" value="P:malonyl-CoA biosynthetic process"/>
    <property type="evidence" value="ECO:0007669"/>
    <property type="project" value="UniProtKB-UniRule"/>
</dbReference>
<dbReference type="Gene3D" id="3.90.226.10">
    <property type="entry name" value="2-enoyl-CoA Hydratase, Chain A, domain 1"/>
    <property type="match status" value="1"/>
</dbReference>
<dbReference type="HAMAP" id="MF_00823">
    <property type="entry name" value="AcetylCoA_CT_alpha"/>
    <property type="match status" value="1"/>
</dbReference>
<dbReference type="InterPro" id="IPR001095">
    <property type="entry name" value="Acetyl_CoA_COase_a_su"/>
</dbReference>
<dbReference type="InterPro" id="IPR029045">
    <property type="entry name" value="ClpP/crotonase-like_dom_sf"/>
</dbReference>
<dbReference type="InterPro" id="IPR011763">
    <property type="entry name" value="COA_CT_C"/>
</dbReference>
<dbReference type="NCBIfam" id="TIGR00513">
    <property type="entry name" value="accA"/>
    <property type="match status" value="1"/>
</dbReference>
<dbReference type="NCBIfam" id="NF041504">
    <property type="entry name" value="AccA_sub"/>
    <property type="match status" value="1"/>
</dbReference>
<dbReference type="NCBIfam" id="NF004344">
    <property type="entry name" value="PRK05724.1"/>
    <property type="match status" value="1"/>
</dbReference>
<dbReference type="PANTHER" id="PTHR42853">
    <property type="entry name" value="ACETYL-COENZYME A CARBOXYLASE CARBOXYL TRANSFERASE SUBUNIT ALPHA"/>
    <property type="match status" value="1"/>
</dbReference>
<dbReference type="PANTHER" id="PTHR42853:SF3">
    <property type="entry name" value="ACETYL-COENZYME A CARBOXYLASE CARBOXYL TRANSFERASE SUBUNIT ALPHA, CHLOROPLASTIC"/>
    <property type="match status" value="1"/>
</dbReference>
<dbReference type="Pfam" id="PF03255">
    <property type="entry name" value="ACCA"/>
    <property type="match status" value="1"/>
</dbReference>
<dbReference type="PRINTS" id="PR01069">
    <property type="entry name" value="ACCCTRFRASEA"/>
</dbReference>
<dbReference type="SUPFAM" id="SSF52096">
    <property type="entry name" value="ClpP/crotonase"/>
    <property type="match status" value="1"/>
</dbReference>
<dbReference type="PROSITE" id="PS50989">
    <property type="entry name" value="COA_CT_CTER"/>
    <property type="match status" value="1"/>
</dbReference>
<protein>
    <recommendedName>
        <fullName evidence="1">Acetyl-coenzyme A carboxylase carboxyl transferase subunit alpha</fullName>
        <shortName evidence="1">ACCase subunit alpha</shortName>
        <shortName evidence="1">Acetyl-CoA carboxylase carboxyltransferase subunit alpha</shortName>
        <ecNumber evidence="1">2.1.3.15</ecNumber>
    </recommendedName>
</protein>
<gene>
    <name evidence="1" type="primary">accA</name>
    <name type="ordered locus">CBU_1510</name>
</gene>
<keyword id="KW-0067">ATP-binding</keyword>
<keyword id="KW-0963">Cytoplasm</keyword>
<keyword id="KW-0275">Fatty acid biosynthesis</keyword>
<keyword id="KW-0276">Fatty acid metabolism</keyword>
<keyword id="KW-0444">Lipid biosynthesis</keyword>
<keyword id="KW-0443">Lipid metabolism</keyword>
<keyword id="KW-0547">Nucleotide-binding</keyword>
<keyword id="KW-1185">Reference proteome</keyword>
<keyword id="KW-0808">Transferase</keyword>
<organism>
    <name type="scientific">Coxiella burnetii (strain RSA 493 / Nine Mile phase I)</name>
    <dbReference type="NCBI Taxonomy" id="227377"/>
    <lineage>
        <taxon>Bacteria</taxon>
        <taxon>Pseudomonadati</taxon>
        <taxon>Pseudomonadota</taxon>
        <taxon>Gammaproteobacteria</taxon>
        <taxon>Legionellales</taxon>
        <taxon>Coxiellaceae</taxon>
        <taxon>Coxiella</taxon>
    </lineage>
</organism>
<sequence length="316" mass="35377">MNLDYLDFEQPIAELQAKIDELRRVGTSQEINLTEEVNKLEEKNAQLTRQIFSNLTAQQIVQLARHPLRPYTLDYIQRIFTDFNELHGDRHYSQASAIIGGLARLNGEPVMVIGHQKGRTTQEKIYRNFGMARPEGFRKALRLMKLAERFSIPVITLIDTPGAYPGIGAEERNQSEAIARNLFEMAQLKIPIICTIIGEGCSGGALAIGVGDRTLMLQYAYYSVISPEGCASILWKSAEKAGEAAEALGLTANRLHELGLIDEIIKEPLGGAHRDTDAMAEKLKKHLQANLTNLQAKSANDLLEERYRRWLSYGKD</sequence>
<proteinExistence type="inferred from homology"/>
<comment type="function">
    <text evidence="1">Component of the acetyl coenzyme A carboxylase (ACC) complex. First, biotin carboxylase catalyzes the carboxylation of biotin on its carrier protein (BCCP) and then the CO(2) group is transferred by the carboxyltransferase to acetyl-CoA to form malonyl-CoA.</text>
</comment>
<comment type="catalytic activity">
    <reaction evidence="1">
        <text>N(6)-carboxybiotinyl-L-lysyl-[protein] + acetyl-CoA = N(6)-biotinyl-L-lysyl-[protein] + malonyl-CoA</text>
        <dbReference type="Rhea" id="RHEA:54728"/>
        <dbReference type="Rhea" id="RHEA-COMP:10505"/>
        <dbReference type="Rhea" id="RHEA-COMP:10506"/>
        <dbReference type="ChEBI" id="CHEBI:57288"/>
        <dbReference type="ChEBI" id="CHEBI:57384"/>
        <dbReference type="ChEBI" id="CHEBI:83144"/>
        <dbReference type="ChEBI" id="CHEBI:83145"/>
        <dbReference type="EC" id="2.1.3.15"/>
    </reaction>
</comment>
<comment type="pathway">
    <text evidence="1">Lipid metabolism; malonyl-CoA biosynthesis; malonyl-CoA from acetyl-CoA: step 1/1.</text>
</comment>
<comment type="subunit">
    <text evidence="1">Acetyl-CoA carboxylase is a heterohexamer composed of biotin carboxyl carrier protein (AccB), biotin carboxylase (AccC) and two subunits each of ACCase subunit alpha (AccA) and ACCase subunit beta (AccD).</text>
</comment>
<comment type="subcellular location">
    <subcellularLocation>
        <location evidence="1">Cytoplasm</location>
    </subcellularLocation>
</comment>
<comment type="similarity">
    <text evidence="1">Belongs to the AccA family.</text>
</comment>
<evidence type="ECO:0000255" key="1">
    <source>
        <dbReference type="HAMAP-Rule" id="MF_00823"/>
    </source>
</evidence>
<evidence type="ECO:0000255" key="2">
    <source>
        <dbReference type="PROSITE-ProRule" id="PRU01137"/>
    </source>
</evidence>
<name>ACCA_COXBU</name>
<reference key="1">
    <citation type="journal article" date="2003" name="Proc. Natl. Acad. Sci. U.S.A.">
        <title>Complete genome sequence of the Q-fever pathogen, Coxiella burnetii.</title>
        <authorList>
            <person name="Seshadri R."/>
            <person name="Paulsen I.T."/>
            <person name="Eisen J.A."/>
            <person name="Read T.D."/>
            <person name="Nelson K.E."/>
            <person name="Nelson W.C."/>
            <person name="Ward N.L."/>
            <person name="Tettelin H."/>
            <person name="Davidsen T.M."/>
            <person name="Beanan M.J."/>
            <person name="DeBoy R.T."/>
            <person name="Daugherty S.C."/>
            <person name="Brinkac L.M."/>
            <person name="Madupu R."/>
            <person name="Dodson R.J."/>
            <person name="Khouri H.M."/>
            <person name="Lee K.H."/>
            <person name="Carty H.A."/>
            <person name="Scanlan D."/>
            <person name="Heinzen R.A."/>
            <person name="Thompson H.A."/>
            <person name="Samuel J.E."/>
            <person name="Fraser C.M."/>
            <person name="Heidelberg J.F."/>
        </authorList>
    </citation>
    <scope>NUCLEOTIDE SEQUENCE [LARGE SCALE GENOMIC DNA]</scope>
    <source>
        <strain>RSA 493 / Nine Mile phase I</strain>
    </source>
</reference>